<protein>
    <recommendedName>
        <fullName evidence="1">5-methyltetrahydropteroyltriglutamate--homocysteine methyltransferase</fullName>
        <ecNumber evidence="1">2.1.1.14</ecNumber>
    </recommendedName>
    <alternativeName>
        <fullName evidence="1">Cobalamin-independent methionine synthase</fullName>
    </alternativeName>
    <alternativeName>
        <fullName evidence="1">Methionine synthase, vitamin-B12 independent isozyme</fullName>
    </alternativeName>
</protein>
<proteinExistence type="inferred from homology"/>
<evidence type="ECO:0000255" key="1">
    <source>
        <dbReference type="HAMAP-Rule" id="MF_00172"/>
    </source>
</evidence>
<organism>
    <name type="scientific">Bacillus cytotoxicus (strain DSM 22905 / CIP 110041 / 391-98 / NVH 391-98)</name>
    <dbReference type="NCBI Taxonomy" id="315749"/>
    <lineage>
        <taxon>Bacteria</taxon>
        <taxon>Bacillati</taxon>
        <taxon>Bacillota</taxon>
        <taxon>Bacilli</taxon>
        <taxon>Bacillales</taxon>
        <taxon>Bacillaceae</taxon>
        <taxon>Bacillus</taxon>
        <taxon>Bacillus cereus group</taxon>
    </lineage>
</organism>
<keyword id="KW-0028">Amino-acid biosynthesis</keyword>
<keyword id="KW-0479">Metal-binding</keyword>
<keyword id="KW-0486">Methionine biosynthesis</keyword>
<keyword id="KW-0489">Methyltransferase</keyword>
<keyword id="KW-0677">Repeat</keyword>
<keyword id="KW-0808">Transferase</keyword>
<keyword id="KW-0862">Zinc</keyword>
<reference key="1">
    <citation type="journal article" date="2008" name="Chem. Biol. Interact.">
        <title>Extending the Bacillus cereus group genomics to putative food-borne pathogens of different toxicity.</title>
        <authorList>
            <person name="Lapidus A."/>
            <person name="Goltsman E."/>
            <person name="Auger S."/>
            <person name="Galleron N."/>
            <person name="Segurens B."/>
            <person name="Dossat C."/>
            <person name="Land M.L."/>
            <person name="Broussolle V."/>
            <person name="Brillard J."/>
            <person name="Guinebretiere M.-H."/>
            <person name="Sanchis V."/>
            <person name="Nguen-the C."/>
            <person name="Lereclus D."/>
            <person name="Richardson P."/>
            <person name="Wincker P."/>
            <person name="Weissenbach J."/>
            <person name="Ehrlich S.D."/>
            <person name="Sorokin A."/>
        </authorList>
    </citation>
    <scope>NUCLEOTIDE SEQUENCE [LARGE SCALE GENOMIC DNA]</scope>
    <source>
        <strain>DSM 22905 / CIP 110041 / 391-98 / NVH 391-98</strain>
    </source>
</reference>
<sequence length="762" mass="87599">MALHTSNLGYPRIGLQREWKKTLEAFWAQKIDEQQLITTMKEIHLEHLNVQKEKGIDFIPIGDFTYYDHVLDTAYMLGFIPSRFSNFTSYLDIYFAMARGSKDHVASEMTKWFNTNYHYIVPEYEEGLNISLKDNRPLRLYEEAKRELGIDGKPVILGPYTFLKLAKGYTQDQFPTILHKLIAPYVQLLTELHKAGARLIQIDEPIFVSLTKEEMIEAKKLYEAIQKEVPSANLILQTYFDSVEENYTELITFPVSGIGLDFVHGKEGNIKSIVEHGFPAEKTLAIGCIDGRNIWRANLDEVFALFETLKAHIEPKDWIIQPSCSLLHTPVDKTEETHLSPELFDALAFANQKLEELTLIKRGLSEGVNSIEIEITTYRNSHEAVRSSAARNRKDVQTARASLKEEDFSRPLPFEQRYDLQQKALQLPLLPTTTIGSFPQTPEVRQTRKQWRNGEITNEQYEHFIEQETEKWIRHQENIGLDVLVHGEFERTDMVEYFGERLAGFSFTKNGWVQSYGSRCVKPPIIFGDVAFISDMTVKETVYAQSLTNKVVKGMLTGPVTILNWSFVRNDLPRKEVCYQIALALRHEIERLESSGIRIIQVDEPALREGMPLKEKDWDSYIEWAVQSFRLATASVANETQIHTHMCYSNFEDIVDAIRALDADVISIETSRSHGEFIHTLEQTTYEKGIGLGVYDIHSPRVPSKEEMYTIVEQSLKVCNPKYFWINPDCGLKTRRTEEVLPALEHMVEAAKEARTLLKTNA</sequence>
<name>METE_BACCN</name>
<feature type="chain" id="PRO_1000077110" description="5-methyltetrahydropteroyltriglutamate--homocysteine methyltransferase">
    <location>
        <begin position="1"/>
        <end position="762"/>
    </location>
</feature>
<feature type="active site" description="Proton donor" evidence="1">
    <location>
        <position position="698"/>
    </location>
</feature>
<feature type="binding site" evidence="1">
    <location>
        <begin position="17"/>
        <end position="20"/>
    </location>
    <ligand>
        <name>5-methyltetrahydropteroyltri-L-glutamate</name>
        <dbReference type="ChEBI" id="CHEBI:58207"/>
    </ligand>
</feature>
<feature type="binding site" evidence="1">
    <location>
        <position position="111"/>
    </location>
    <ligand>
        <name>5-methyltetrahydropteroyltri-L-glutamate</name>
        <dbReference type="ChEBI" id="CHEBI:58207"/>
    </ligand>
</feature>
<feature type="binding site" evidence="1">
    <location>
        <begin position="435"/>
        <end position="437"/>
    </location>
    <ligand>
        <name>L-homocysteine</name>
        <dbReference type="ChEBI" id="CHEBI:58199"/>
    </ligand>
</feature>
<feature type="binding site" evidence="1">
    <location>
        <begin position="435"/>
        <end position="437"/>
    </location>
    <ligand>
        <name>L-methionine</name>
        <dbReference type="ChEBI" id="CHEBI:57844"/>
    </ligand>
</feature>
<feature type="binding site" evidence="1">
    <location>
        <position position="488"/>
    </location>
    <ligand>
        <name>L-homocysteine</name>
        <dbReference type="ChEBI" id="CHEBI:58199"/>
    </ligand>
</feature>
<feature type="binding site" evidence="1">
    <location>
        <position position="488"/>
    </location>
    <ligand>
        <name>L-methionine</name>
        <dbReference type="ChEBI" id="CHEBI:57844"/>
    </ligand>
</feature>
<feature type="binding site" evidence="1">
    <location>
        <begin position="519"/>
        <end position="520"/>
    </location>
    <ligand>
        <name>5-methyltetrahydropteroyltri-L-glutamate</name>
        <dbReference type="ChEBI" id="CHEBI:58207"/>
    </ligand>
</feature>
<feature type="binding site" evidence="1">
    <location>
        <position position="565"/>
    </location>
    <ligand>
        <name>5-methyltetrahydropteroyltri-L-glutamate</name>
        <dbReference type="ChEBI" id="CHEBI:58207"/>
    </ligand>
</feature>
<feature type="binding site" evidence="1">
    <location>
        <position position="603"/>
    </location>
    <ligand>
        <name>L-homocysteine</name>
        <dbReference type="ChEBI" id="CHEBI:58199"/>
    </ligand>
</feature>
<feature type="binding site" evidence="1">
    <location>
        <position position="603"/>
    </location>
    <ligand>
        <name>L-methionine</name>
        <dbReference type="ChEBI" id="CHEBI:57844"/>
    </ligand>
</feature>
<feature type="binding site" evidence="1">
    <location>
        <position position="609"/>
    </location>
    <ligand>
        <name>5-methyltetrahydropteroyltri-L-glutamate</name>
        <dbReference type="ChEBI" id="CHEBI:58207"/>
    </ligand>
</feature>
<feature type="binding site" evidence="1">
    <location>
        <position position="645"/>
    </location>
    <ligand>
        <name>Zn(2+)</name>
        <dbReference type="ChEBI" id="CHEBI:29105"/>
        <note>catalytic</note>
    </ligand>
</feature>
<feature type="binding site" evidence="1">
    <location>
        <position position="647"/>
    </location>
    <ligand>
        <name>Zn(2+)</name>
        <dbReference type="ChEBI" id="CHEBI:29105"/>
        <note>catalytic</note>
    </ligand>
</feature>
<feature type="binding site" evidence="1">
    <location>
        <position position="669"/>
    </location>
    <ligand>
        <name>Zn(2+)</name>
        <dbReference type="ChEBI" id="CHEBI:29105"/>
        <note>catalytic</note>
    </ligand>
</feature>
<feature type="binding site" evidence="1">
    <location>
        <position position="730"/>
    </location>
    <ligand>
        <name>Zn(2+)</name>
        <dbReference type="ChEBI" id="CHEBI:29105"/>
        <note>catalytic</note>
    </ligand>
</feature>
<gene>
    <name evidence="1" type="primary">metE</name>
    <name type="ordered locus">Bcer98_2704</name>
</gene>
<dbReference type="EC" id="2.1.1.14" evidence="1"/>
<dbReference type="EMBL" id="CP000764">
    <property type="protein sequence ID" value="ABS22938.1"/>
    <property type="molecule type" value="Genomic_DNA"/>
</dbReference>
<dbReference type="RefSeq" id="WP_012095161.1">
    <property type="nucleotide sequence ID" value="NC_009674.1"/>
</dbReference>
<dbReference type="SMR" id="A7GS30"/>
<dbReference type="STRING" id="315749.Bcer98_2704"/>
<dbReference type="GeneID" id="33897959"/>
<dbReference type="KEGG" id="bcy:Bcer98_2704"/>
<dbReference type="eggNOG" id="COG0620">
    <property type="taxonomic scope" value="Bacteria"/>
</dbReference>
<dbReference type="HOGENOM" id="CLU_013175_0_0_9"/>
<dbReference type="OrthoDB" id="244285at2"/>
<dbReference type="UniPathway" id="UPA00051">
    <property type="reaction ID" value="UER00082"/>
</dbReference>
<dbReference type="Proteomes" id="UP000002300">
    <property type="component" value="Chromosome"/>
</dbReference>
<dbReference type="GO" id="GO:0003871">
    <property type="term" value="F:5-methyltetrahydropteroyltriglutamate-homocysteine S-methyltransferase activity"/>
    <property type="evidence" value="ECO:0007669"/>
    <property type="project" value="UniProtKB-UniRule"/>
</dbReference>
<dbReference type="GO" id="GO:0008270">
    <property type="term" value="F:zinc ion binding"/>
    <property type="evidence" value="ECO:0007669"/>
    <property type="project" value="InterPro"/>
</dbReference>
<dbReference type="GO" id="GO:0009086">
    <property type="term" value="P:methionine biosynthetic process"/>
    <property type="evidence" value="ECO:0007669"/>
    <property type="project" value="UniProtKB-UniRule"/>
</dbReference>
<dbReference type="GO" id="GO:0032259">
    <property type="term" value="P:methylation"/>
    <property type="evidence" value="ECO:0007669"/>
    <property type="project" value="UniProtKB-KW"/>
</dbReference>
<dbReference type="CDD" id="cd03311">
    <property type="entry name" value="CIMS_C_terminal_like"/>
    <property type="match status" value="1"/>
</dbReference>
<dbReference type="CDD" id="cd03312">
    <property type="entry name" value="CIMS_N_terminal_like"/>
    <property type="match status" value="1"/>
</dbReference>
<dbReference type="Gene3D" id="3.20.20.210">
    <property type="match status" value="2"/>
</dbReference>
<dbReference type="HAMAP" id="MF_00172">
    <property type="entry name" value="Meth_synth"/>
    <property type="match status" value="1"/>
</dbReference>
<dbReference type="InterPro" id="IPR013215">
    <property type="entry name" value="Cbl-indep_Met_Synth_N"/>
</dbReference>
<dbReference type="InterPro" id="IPR006276">
    <property type="entry name" value="Cobalamin-indep_Met_synthase"/>
</dbReference>
<dbReference type="InterPro" id="IPR002629">
    <property type="entry name" value="Met_Synth_C/arc"/>
</dbReference>
<dbReference type="InterPro" id="IPR038071">
    <property type="entry name" value="UROD/MetE-like_sf"/>
</dbReference>
<dbReference type="NCBIfam" id="TIGR01371">
    <property type="entry name" value="met_syn_B12ind"/>
    <property type="match status" value="1"/>
</dbReference>
<dbReference type="NCBIfam" id="NF003556">
    <property type="entry name" value="PRK05222.1"/>
    <property type="match status" value="1"/>
</dbReference>
<dbReference type="PANTHER" id="PTHR30519">
    <property type="entry name" value="5-METHYLTETRAHYDROPTEROYLTRIGLUTAMATE--HOMOCYSTEINE METHYLTRANSFERASE"/>
    <property type="match status" value="1"/>
</dbReference>
<dbReference type="Pfam" id="PF08267">
    <property type="entry name" value="Meth_synt_1"/>
    <property type="match status" value="1"/>
</dbReference>
<dbReference type="Pfam" id="PF01717">
    <property type="entry name" value="Meth_synt_2"/>
    <property type="match status" value="1"/>
</dbReference>
<dbReference type="PIRSF" id="PIRSF000382">
    <property type="entry name" value="MeTrfase_B12_ind"/>
    <property type="match status" value="1"/>
</dbReference>
<dbReference type="SUPFAM" id="SSF51726">
    <property type="entry name" value="UROD/MetE-like"/>
    <property type="match status" value="2"/>
</dbReference>
<accession>A7GS30</accession>
<comment type="function">
    <text evidence="1">Catalyzes the transfer of a methyl group from 5-methyltetrahydrofolate to homocysteine resulting in methionine formation.</text>
</comment>
<comment type="catalytic activity">
    <reaction evidence="1">
        <text>5-methyltetrahydropteroyltri-L-glutamate + L-homocysteine = tetrahydropteroyltri-L-glutamate + L-methionine</text>
        <dbReference type="Rhea" id="RHEA:21196"/>
        <dbReference type="ChEBI" id="CHEBI:57844"/>
        <dbReference type="ChEBI" id="CHEBI:58140"/>
        <dbReference type="ChEBI" id="CHEBI:58199"/>
        <dbReference type="ChEBI" id="CHEBI:58207"/>
        <dbReference type="EC" id="2.1.1.14"/>
    </reaction>
</comment>
<comment type="cofactor">
    <cofactor evidence="1">
        <name>Zn(2+)</name>
        <dbReference type="ChEBI" id="CHEBI:29105"/>
    </cofactor>
    <text evidence="1">Binds 1 zinc ion per subunit.</text>
</comment>
<comment type="pathway">
    <text evidence="1">Amino-acid biosynthesis; L-methionine biosynthesis via de novo pathway; L-methionine from L-homocysteine (MetE route): step 1/1.</text>
</comment>
<comment type="similarity">
    <text evidence="1">Belongs to the vitamin-B12 independent methionine synthase family.</text>
</comment>